<comment type="similarity">
    <text evidence="1">Belongs to the universal ribosomal protein uL16 family.</text>
</comment>
<keyword id="KW-0687">Ribonucleoprotein</keyword>
<keyword id="KW-0689">Ribosomal protein</keyword>
<gene>
    <name evidence="1" type="primary">rpl10e</name>
    <name type="ordered locus">M1425_1806</name>
</gene>
<evidence type="ECO:0000255" key="1">
    <source>
        <dbReference type="HAMAP-Rule" id="MF_00448"/>
    </source>
</evidence>
<evidence type="ECO:0000305" key="2"/>
<proteinExistence type="inferred from homology"/>
<organism>
    <name type="scientific">Saccharolobus islandicus (strain M.14.25 / Kamchatka #1)</name>
    <name type="common">Sulfolobus islandicus</name>
    <dbReference type="NCBI Taxonomy" id="427317"/>
    <lineage>
        <taxon>Archaea</taxon>
        <taxon>Thermoproteota</taxon>
        <taxon>Thermoprotei</taxon>
        <taxon>Sulfolobales</taxon>
        <taxon>Sulfolobaceae</taxon>
        <taxon>Saccharolobus</taxon>
    </lineage>
</organism>
<reference key="1">
    <citation type="journal article" date="2009" name="Proc. Natl. Acad. Sci. U.S.A.">
        <title>Biogeography of the Sulfolobus islandicus pan-genome.</title>
        <authorList>
            <person name="Reno M.L."/>
            <person name="Held N.L."/>
            <person name="Fields C.J."/>
            <person name="Burke P.V."/>
            <person name="Whitaker R.J."/>
        </authorList>
    </citation>
    <scope>NUCLEOTIDE SEQUENCE [LARGE SCALE GENOMIC DNA]</scope>
    <source>
        <strain>M.14.25 / Kamchatka #1</strain>
    </source>
</reference>
<sequence>MPLRPGRCYRHFSGPAYTRKEYIPGIPQPKITKFTSGNPNGDYDYEVRLITTEIGQIRHNALEAVRTITLKTLTKRTGSETSFFMWILKYPHHVLRENKMMAFAGADRLQDGMRLSFGTPIGTAARIEKLGEILIVVKVKKEHLDFAKEALKIASKKLPLRTRIEIIPLRPIRQEVQS</sequence>
<protein>
    <recommendedName>
        <fullName evidence="1">Large ribosomal subunit protein uL16</fullName>
    </recommendedName>
    <alternativeName>
        <fullName evidence="2">50S ribosomal protein L10e</fullName>
    </alternativeName>
</protein>
<dbReference type="EMBL" id="CP001400">
    <property type="protein sequence ID" value="ACP38551.1"/>
    <property type="molecule type" value="Genomic_DNA"/>
</dbReference>
<dbReference type="RefSeq" id="WP_012711781.1">
    <property type="nucleotide sequence ID" value="NC_012588.1"/>
</dbReference>
<dbReference type="SMR" id="C3MXL7"/>
<dbReference type="KEGG" id="sia:M1425_1806"/>
<dbReference type="HOGENOM" id="CLU_084051_0_2_2"/>
<dbReference type="Proteomes" id="UP000001350">
    <property type="component" value="Chromosome"/>
</dbReference>
<dbReference type="GO" id="GO:1990904">
    <property type="term" value="C:ribonucleoprotein complex"/>
    <property type="evidence" value="ECO:0007669"/>
    <property type="project" value="UniProtKB-KW"/>
</dbReference>
<dbReference type="GO" id="GO:0005840">
    <property type="term" value="C:ribosome"/>
    <property type="evidence" value="ECO:0007669"/>
    <property type="project" value="UniProtKB-KW"/>
</dbReference>
<dbReference type="GO" id="GO:0003735">
    <property type="term" value="F:structural constituent of ribosome"/>
    <property type="evidence" value="ECO:0007669"/>
    <property type="project" value="InterPro"/>
</dbReference>
<dbReference type="GO" id="GO:0006412">
    <property type="term" value="P:translation"/>
    <property type="evidence" value="ECO:0007669"/>
    <property type="project" value="UniProtKB-UniRule"/>
</dbReference>
<dbReference type="CDD" id="cd01433">
    <property type="entry name" value="Ribosomal_L16_L10e"/>
    <property type="match status" value="1"/>
</dbReference>
<dbReference type="FunFam" id="3.90.1170.10:FF:000008">
    <property type="entry name" value="50S ribosomal protein L10e"/>
    <property type="match status" value="1"/>
</dbReference>
<dbReference type="Gene3D" id="3.90.1170.10">
    <property type="entry name" value="Ribosomal protein L10e/L16"/>
    <property type="match status" value="1"/>
</dbReference>
<dbReference type="HAMAP" id="MF_00448">
    <property type="entry name" value="Ribosomal_uL16_arch"/>
    <property type="match status" value="1"/>
</dbReference>
<dbReference type="InterPro" id="IPR047873">
    <property type="entry name" value="Ribosomal_uL16"/>
</dbReference>
<dbReference type="InterPro" id="IPR022981">
    <property type="entry name" value="Ribosomal_uL16_arc"/>
</dbReference>
<dbReference type="InterPro" id="IPR018255">
    <property type="entry name" value="Ribosomal_uL16_CS_euk_arc"/>
</dbReference>
<dbReference type="InterPro" id="IPR016180">
    <property type="entry name" value="Ribosomal_uL16_dom"/>
</dbReference>
<dbReference type="InterPro" id="IPR001197">
    <property type="entry name" value="Ribosomal_uL16_euk_arch"/>
</dbReference>
<dbReference type="InterPro" id="IPR036920">
    <property type="entry name" value="Ribosomal_uL16_sf"/>
</dbReference>
<dbReference type="NCBIfam" id="NF003236">
    <property type="entry name" value="PRK04199.1-1"/>
    <property type="match status" value="1"/>
</dbReference>
<dbReference type="NCBIfam" id="NF003239">
    <property type="entry name" value="PRK04199.1-4"/>
    <property type="match status" value="1"/>
</dbReference>
<dbReference type="PANTHER" id="PTHR11726">
    <property type="entry name" value="60S RIBOSOMAL PROTEIN L10"/>
    <property type="match status" value="1"/>
</dbReference>
<dbReference type="Pfam" id="PF00252">
    <property type="entry name" value="Ribosomal_L16"/>
    <property type="match status" value="1"/>
</dbReference>
<dbReference type="PIRSF" id="PIRSF005590">
    <property type="entry name" value="Ribosomal_L10"/>
    <property type="match status" value="1"/>
</dbReference>
<dbReference type="SUPFAM" id="SSF54686">
    <property type="entry name" value="Ribosomal protein L16p/L10e"/>
    <property type="match status" value="1"/>
</dbReference>
<dbReference type="PROSITE" id="PS01257">
    <property type="entry name" value="RIBOSOMAL_L10E"/>
    <property type="match status" value="1"/>
</dbReference>
<feature type="chain" id="PRO_1000206201" description="Large ribosomal subunit protein uL16">
    <location>
        <begin position="1"/>
        <end position="178"/>
    </location>
</feature>
<accession>C3MXL7</accession>
<name>RL10E_SACI4</name>